<sequence length="251" mass="28475">MNLNSIPAFDDNYIWVLNDEAGRCLIVDPGDAEPVLNAISANNWQPEAIFLTHHHHDHVGGVKELVEKFPQIVVYGPQETQDKGTTQVVKDGETAFVLGHEFSVIATPGHTLGHICYFSKPYLFCGDTLFSGGCGRLFEGTPSQMYQSLKKLSALPDDTLVCCAHEYTLSNMKFALSILPHDLSINDYYRKVKELRAKNQITLPVILKNERQINVFLRTENIDLINVINEETLLQQPEERFAWLRSKKDRF</sequence>
<name>GLO2_ECO81</name>
<comment type="function">
    <text evidence="1">Thiolesterase that catalyzes the hydrolysis of S-D-lactoyl-glutathione to form glutathione and D-lactic acid.</text>
</comment>
<comment type="catalytic activity">
    <reaction evidence="1">
        <text>an S-(2-hydroxyacyl)glutathione + H2O = a 2-hydroxy carboxylate + glutathione + H(+)</text>
        <dbReference type="Rhea" id="RHEA:21864"/>
        <dbReference type="ChEBI" id="CHEBI:15377"/>
        <dbReference type="ChEBI" id="CHEBI:15378"/>
        <dbReference type="ChEBI" id="CHEBI:57925"/>
        <dbReference type="ChEBI" id="CHEBI:58896"/>
        <dbReference type="ChEBI" id="CHEBI:71261"/>
        <dbReference type="EC" id="3.1.2.6"/>
    </reaction>
</comment>
<comment type="cofactor">
    <cofactor evidence="1">
        <name>Zn(2+)</name>
        <dbReference type="ChEBI" id="CHEBI:29105"/>
    </cofactor>
    <text evidence="1">Binds 2 Zn(2+) ions per subunit.</text>
</comment>
<comment type="pathway">
    <text evidence="1">Secondary metabolite metabolism; methylglyoxal degradation; (R)-lactate from methylglyoxal: step 2/2.</text>
</comment>
<comment type="subunit">
    <text evidence="1">Monomer.</text>
</comment>
<comment type="similarity">
    <text evidence="1">Belongs to the metallo-beta-lactamase superfamily. Glyoxalase II family.</text>
</comment>
<keyword id="KW-0378">Hydrolase</keyword>
<keyword id="KW-0479">Metal-binding</keyword>
<keyword id="KW-0862">Zinc</keyword>
<reference key="1">
    <citation type="journal article" date="2009" name="PLoS Genet.">
        <title>Organised genome dynamics in the Escherichia coli species results in highly diverse adaptive paths.</title>
        <authorList>
            <person name="Touchon M."/>
            <person name="Hoede C."/>
            <person name="Tenaillon O."/>
            <person name="Barbe V."/>
            <person name="Baeriswyl S."/>
            <person name="Bidet P."/>
            <person name="Bingen E."/>
            <person name="Bonacorsi S."/>
            <person name="Bouchier C."/>
            <person name="Bouvet O."/>
            <person name="Calteau A."/>
            <person name="Chiapello H."/>
            <person name="Clermont O."/>
            <person name="Cruveiller S."/>
            <person name="Danchin A."/>
            <person name="Diard M."/>
            <person name="Dossat C."/>
            <person name="Karoui M.E."/>
            <person name="Frapy E."/>
            <person name="Garry L."/>
            <person name="Ghigo J.M."/>
            <person name="Gilles A.M."/>
            <person name="Johnson J."/>
            <person name="Le Bouguenec C."/>
            <person name="Lescat M."/>
            <person name="Mangenot S."/>
            <person name="Martinez-Jehanne V."/>
            <person name="Matic I."/>
            <person name="Nassif X."/>
            <person name="Oztas S."/>
            <person name="Petit M.A."/>
            <person name="Pichon C."/>
            <person name="Rouy Z."/>
            <person name="Ruf C.S."/>
            <person name="Schneider D."/>
            <person name="Tourret J."/>
            <person name="Vacherie B."/>
            <person name="Vallenet D."/>
            <person name="Medigue C."/>
            <person name="Rocha E.P.C."/>
            <person name="Denamur E."/>
        </authorList>
    </citation>
    <scope>NUCLEOTIDE SEQUENCE [LARGE SCALE GENOMIC DNA]</scope>
    <source>
        <strain>ED1a</strain>
    </source>
</reference>
<evidence type="ECO:0000255" key="1">
    <source>
        <dbReference type="HAMAP-Rule" id="MF_01374"/>
    </source>
</evidence>
<proteinExistence type="inferred from homology"/>
<protein>
    <recommendedName>
        <fullName evidence="1">Hydroxyacylglutathione hydrolase</fullName>
        <ecNumber evidence="1">3.1.2.6</ecNumber>
    </recommendedName>
    <alternativeName>
        <fullName evidence="1">Glyoxalase II</fullName>
        <shortName evidence="1">Glx II</shortName>
    </alternativeName>
</protein>
<accession>B7MQ21</accession>
<gene>
    <name evidence="1" type="primary">gloB</name>
    <name type="ordered locus">ECED1_0217</name>
</gene>
<organism>
    <name type="scientific">Escherichia coli O81 (strain ED1a)</name>
    <dbReference type="NCBI Taxonomy" id="585397"/>
    <lineage>
        <taxon>Bacteria</taxon>
        <taxon>Pseudomonadati</taxon>
        <taxon>Pseudomonadota</taxon>
        <taxon>Gammaproteobacteria</taxon>
        <taxon>Enterobacterales</taxon>
        <taxon>Enterobacteriaceae</taxon>
        <taxon>Escherichia</taxon>
    </lineage>
</organism>
<dbReference type="EC" id="3.1.2.6" evidence="1"/>
<dbReference type="EMBL" id="CU928162">
    <property type="protein sequence ID" value="CAR06433.1"/>
    <property type="molecule type" value="Genomic_DNA"/>
</dbReference>
<dbReference type="RefSeq" id="WP_001052744.1">
    <property type="nucleotide sequence ID" value="NC_011745.1"/>
</dbReference>
<dbReference type="SMR" id="B7MQ21"/>
<dbReference type="KEGG" id="ecq:ECED1_0217"/>
<dbReference type="HOGENOM" id="CLU_030571_4_1_6"/>
<dbReference type="UniPathway" id="UPA00619">
    <property type="reaction ID" value="UER00676"/>
</dbReference>
<dbReference type="Proteomes" id="UP000000748">
    <property type="component" value="Chromosome"/>
</dbReference>
<dbReference type="GO" id="GO:0004416">
    <property type="term" value="F:hydroxyacylglutathione hydrolase activity"/>
    <property type="evidence" value="ECO:0007669"/>
    <property type="project" value="UniProtKB-UniRule"/>
</dbReference>
<dbReference type="GO" id="GO:0046872">
    <property type="term" value="F:metal ion binding"/>
    <property type="evidence" value="ECO:0007669"/>
    <property type="project" value="UniProtKB-KW"/>
</dbReference>
<dbReference type="GO" id="GO:0019243">
    <property type="term" value="P:methylglyoxal catabolic process to D-lactate via S-lactoyl-glutathione"/>
    <property type="evidence" value="ECO:0007669"/>
    <property type="project" value="InterPro"/>
</dbReference>
<dbReference type="CDD" id="cd07723">
    <property type="entry name" value="hydroxyacylglutathione_hydrolase_MBL-fold"/>
    <property type="match status" value="1"/>
</dbReference>
<dbReference type="FunFam" id="3.60.15.10:FF:000012">
    <property type="entry name" value="Hydroxyacylglutathione hydrolase"/>
    <property type="match status" value="1"/>
</dbReference>
<dbReference type="Gene3D" id="3.60.15.10">
    <property type="entry name" value="Ribonuclease Z/Hydroxyacylglutathione hydrolase-like"/>
    <property type="match status" value="1"/>
</dbReference>
<dbReference type="HAMAP" id="MF_01374">
    <property type="entry name" value="Glyoxalase_2"/>
    <property type="match status" value="1"/>
</dbReference>
<dbReference type="InterPro" id="IPR035680">
    <property type="entry name" value="Clx_II_MBL"/>
</dbReference>
<dbReference type="InterPro" id="IPR050110">
    <property type="entry name" value="Glyoxalase_II_hydrolase"/>
</dbReference>
<dbReference type="InterPro" id="IPR032282">
    <property type="entry name" value="HAGH_C"/>
</dbReference>
<dbReference type="InterPro" id="IPR017782">
    <property type="entry name" value="Hydroxyacylglutathione_Hdrlase"/>
</dbReference>
<dbReference type="InterPro" id="IPR001279">
    <property type="entry name" value="Metallo-B-lactamas"/>
</dbReference>
<dbReference type="InterPro" id="IPR036866">
    <property type="entry name" value="RibonucZ/Hydroxyglut_hydro"/>
</dbReference>
<dbReference type="NCBIfam" id="TIGR03413">
    <property type="entry name" value="GSH_gloB"/>
    <property type="match status" value="1"/>
</dbReference>
<dbReference type="NCBIfam" id="NF007597">
    <property type="entry name" value="PRK10241.1"/>
    <property type="match status" value="1"/>
</dbReference>
<dbReference type="PANTHER" id="PTHR43705">
    <property type="entry name" value="HYDROXYACYLGLUTATHIONE HYDROLASE"/>
    <property type="match status" value="1"/>
</dbReference>
<dbReference type="PANTHER" id="PTHR43705:SF1">
    <property type="entry name" value="HYDROXYACYLGLUTATHIONE HYDROLASE GLOB"/>
    <property type="match status" value="1"/>
</dbReference>
<dbReference type="Pfam" id="PF16123">
    <property type="entry name" value="HAGH_C"/>
    <property type="match status" value="1"/>
</dbReference>
<dbReference type="Pfam" id="PF00753">
    <property type="entry name" value="Lactamase_B"/>
    <property type="match status" value="1"/>
</dbReference>
<dbReference type="PIRSF" id="PIRSF005457">
    <property type="entry name" value="Glx"/>
    <property type="match status" value="1"/>
</dbReference>
<dbReference type="SMART" id="SM00849">
    <property type="entry name" value="Lactamase_B"/>
    <property type="match status" value="1"/>
</dbReference>
<dbReference type="SUPFAM" id="SSF56281">
    <property type="entry name" value="Metallo-hydrolase/oxidoreductase"/>
    <property type="match status" value="1"/>
</dbReference>
<feature type="chain" id="PRO_1000184179" description="Hydroxyacylglutathione hydrolase">
    <location>
        <begin position="1"/>
        <end position="251"/>
    </location>
</feature>
<feature type="binding site" evidence="1">
    <location>
        <position position="53"/>
    </location>
    <ligand>
        <name>Zn(2+)</name>
        <dbReference type="ChEBI" id="CHEBI:29105"/>
        <label>1</label>
    </ligand>
</feature>
<feature type="binding site" evidence="1">
    <location>
        <position position="55"/>
    </location>
    <ligand>
        <name>Zn(2+)</name>
        <dbReference type="ChEBI" id="CHEBI:29105"/>
        <label>1</label>
    </ligand>
</feature>
<feature type="binding site" evidence="1">
    <location>
        <position position="57"/>
    </location>
    <ligand>
        <name>Zn(2+)</name>
        <dbReference type="ChEBI" id="CHEBI:29105"/>
        <label>2</label>
    </ligand>
</feature>
<feature type="binding site" evidence="1">
    <location>
        <position position="58"/>
    </location>
    <ligand>
        <name>Zn(2+)</name>
        <dbReference type="ChEBI" id="CHEBI:29105"/>
        <label>2</label>
    </ligand>
</feature>
<feature type="binding site" evidence="1">
    <location>
        <position position="110"/>
    </location>
    <ligand>
        <name>Zn(2+)</name>
        <dbReference type="ChEBI" id="CHEBI:29105"/>
        <label>1</label>
    </ligand>
</feature>
<feature type="binding site" evidence="1">
    <location>
        <position position="127"/>
    </location>
    <ligand>
        <name>Zn(2+)</name>
        <dbReference type="ChEBI" id="CHEBI:29105"/>
        <label>1</label>
    </ligand>
</feature>
<feature type="binding site" evidence="1">
    <location>
        <position position="127"/>
    </location>
    <ligand>
        <name>Zn(2+)</name>
        <dbReference type="ChEBI" id="CHEBI:29105"/>
        <label>2</label>
    </ligand>
</feature>
<feature type="binding site" evidence="1">
    <location>
        <position position="165"/>
    </location>
    <ligand>
        <name>Zn(2+)</name>
        <dbReference type="ChEBI" id="CHEBI:29105"/>
        <label>2</label>
    </ligand>
</feature>